<sequence>MKLLMVLMLAALSQHCYAGSGCPLLENVISKTINPQVSKTEYKELLQEFIDDNATTNAIDELKECFLNQTDETLSNVEVFMQLIYDSSLCDLF</sequence>
<protein>
    <recommendedName>
        <fullName>Mammaglobin-A</fullName>
    </recommendedName>
    <alternativeName>
        <fullName>Mammaglobin-1</fullName>
    </alternativeName>
    <alternativeName>
        <fullName>Secretoglobin family 2A member 2</fullName>
    </alternativeName>
</protein>
<keyword id="KW-0025">Alternative splicing</keyword>
<keyword id="KW-0325">Glycoprotein</keyword>
<keyword id="KW-1267">Proteomics identification</keyword>
<keyword id="KW-1185">Reference proteome</keyword>
<keyword id="KW-0964">Secreted</keyword>
<keyword id="KW-0732">Signal</keyword>
<organism>
    <name type="scientific">Homo sapiens</name>
    <name type="common">Human</name>
    <dbReference type="NCBI Taxonomy" id="9606"/>
    <lineage>
        <taxon>Eukaryota</taxon>
        <taxon>Metazoa</taxon>
        <taxon>Chordata</taxon>
        <taxon>Craniata</taxon>
        <taxon>Vertebrata</taxon>
        <taxon>Euteleostomi</taxon>
        <taxon>Mammalia</taxon>
        <taxon>Eutheria</taxon>
        <taxon>Euarchontoglires</taxon>
        <taxon>Primates</taxon>
        <taxon>Haplorrhini</taxon>
        <taxon>Catarrhini</taxon>
        <taxon>Hominidae</taxon>
        <taxon>Homo</taxon>
    </lineage>
</organism>
<gene>
    <name type="primary">SCGB2A2</name>
    <name type="synonym">MGB1</name>
    <name type="synonym">UGB2</name>
</gene>
<evidence type="ECO:0000255" key="1"/>
<evidence type="ECO:0000303" key="2">
    <source ref="3"/>
</evidence>
<evidence type="ECO:0000305" key="3"/>
<feature type="signal peptide" evidence="1">
    <location>
        <begin position="1"/>
        <end position="18"/>
    </location>
</feature>
<feature type="chain" id="PRO_0000036372" description="Mammaglobin-A">
    <location>
        <begin position="19"/>
        <end position="93"/>
    </location>
</feature>
<feature type="glycosylation site" description="N-linked (GlcNAc...) asparagine" evidence="1">
    <location>
        <position position="53"/>
    </location>
</feature>
<feature type="glycosylation site" description="N-linked (GlcNAc...) asparagine" evidence="1">
    <location>
        <position position="68"/>
    </location>
</feature>
<feature type="splice variant" id="VSP_009122" description="In isoform 2." evidence="2">
    <location>
        <begin position="79"/>
        <end position="81"/>
    </location>
</feature>
<name>SG2A2_HUMAN</name>
<proteinExistence type="evidence at protein level"/>
<accession>Q13296</accession>
<accession>A1A522</accession>
<accession>Q86WH8</accession>
<dbReference type="EMBL" id="U33147">
    <property type="protein sequence ID" value="AAC50375.1"/>
    <property type="molecule type" value="mRNA"/>
</dbReference>
<dbReference type="EMBL" id="AF015224">
    <property type="protein sequence ID" value="AAC39608.1"/>
    <property type="molecule type" value="Genomic_DNA"/>
</dbReference>
<dbReference type="EMBL" id="AY217100">
    <property type="protein sequence ID" value="AAO60111.1"/>
    <property type="molecule type" value="mRNA"/>
</dbReference>
<dbReference type="EMBL" id="BC128252">
    <property type="protein sequence ID" value="AAI28253.1"/>
    <property type="molecule type" value="mRNA"/>
</dbReference>
<dbReference type="EMBL" id="BC128402">
    <property type="protein sequence ID" value="AAI28403.1"/>
    <property type="molecule type" value="mRNA"/>
</dbReference>
<dbReference type="CCDS" id="CCDS8018.1">
    <molecule id="Q13296-1"/>
</dbReference>
<dbReference type="RefSeq" id="NP_002402.1">
    <molecule id="Q13296-1"/>
    <property type="nucleotide sequence ID" value="NM_002411.4"/>
</dbReference>
<dbReference type="SMR" id="Q13296"/>
<dbReference type="BioGRID" id="110406">
    <property type="interactions" value="269"/>
</dbReference>
<dbReference type="FunCoup" id="Q13296">
    <property type="interactions" value="69"/>
</dbReference>
<dbReference type="IntAct" id="Q13296">
    <property type="interactions" value="219"/>
</dbReference>
<dbReference type="MINT" id="Q13296"/>
<dbReference type="STRING" id="9606.ENSP00000227918"/>
<dbReference type="GlyConnect" id="1486">
    <property type="glycosylation" value="26 N-Linked glycans (1 site)"/>
</dbReference>
<dbReference type="GlyCosmos" id="Q13296">
    <property type="glycosylation" value="2 sites, 25 glycans"/>
</dbReference>
<dbReference type="GlyGen" id="Q13296">
    <property type="glycosylation" value="3 sites, 24 N-linked glycans (1 site), 1 O-linked glycan (1 site)"/>
</dbReference>
<dbReference type="iPTMnet" id="Q13296"/>
<dbReference type="PhosphoSitePlus" id="Q13296"/>
<dbReference type="BioMuta" id="SCGB2A2"/>
<dbReference type="DMDM" id="2833243"/>
<dbReference type="MassIVE" id="Q13296"/>
<dbReference type="PaxDb" id="9606-ENSP00000227918"/>
<dbReference type="PeptideAtlas" id="Q13296"/>
<dbReference type="ProteomicsDB" id="59286">
    <molecule id="Q13296-1"/>
</dbReference>
<dbReference type="ProteomicsDB" id="59287">
    <molecule id="Q13296-2"/>
</dbReference>
<dbReference type="Antibodypedia" id="28425">
    <property type="antibodies" value="470 antibodies from 40 providers"/>
</dbReference>
<dbReference type="DNASU" id="4250"/>
<dbReference type="Ensembl" id="ENST00000227918.3">
    <molecule id="Q13296-1"/>
    <property type="protein sequence ID" value="ENSP00000227918.2"/>
    <property type="gene ID" value="ENSG00000110484.7"/>
</dbReference>
<dbReference type="GeneID" id="4250"/>
<dbReference type="KEGG" id="hsa:4250"/>
<dbReference type="MANE-Select" id="ENST00000227918.3">
    <property type="protein sequence ID" value="ENSP00000227918.2"/>
    <property type="RefSeq nucleotide sequence ID" value="NM_002411.4"/>
    <property type="RefSeq protein sequence ID" value="NP_002402.1"/>
</dbReference>
<dbReference type="UCSC" id="uc001ntc.5">
    <molecule id="Q13296-1"/>
    <property type="organism name" value="human"/>
</dbReference>
<dbReference type="AGR" id="HGNC:7050"/>
<dbReference type="CTD" id="4250"/>
<dbReference type="DisGeNET" id="4250"/>
<dbReference type="GeneCards" id="SCGB2A2"/>
<dbReference type="HGNC" id="HGNC:7050">
    <property type="gene designation" value="SCGB2A2"/>
</dbReference>
<dbReference type="HPA" id="ENSG00000110484">
    <property type="expression patterns" value="Group enriched (breast, skin)"/>
</dbReference>
<dbReference type="MIM" id="605562">
    <property type="type" value="gene"/>
</dbReference>
<dbReference type="neXtProt" id="NX_Q13296"/>
<dbReference type="OpenTargets" id="ENSG00000110484"/>
<dbReference type="PharmGKB" id="PA34993"/>
<dbReference type="VEuPathDB" id="HostDB:ENSG00000110484"/>
<dbReference type="eggNOG" id="ENOG502TE5J">
    <property type="taxonomic scope" value="Eukaryota"/>
</dbReference>
<dbReference type="GeneTree" id="ENSGT00390000013802"/>
<dbReference type="HOGENOM" id="CLU_161063_0_0_1"/>
<dbReference type="InParanoid" id="Q13296"/>
<dbReference type="OMA" id="ALMNTIY"/>
<dbReference type="OrthoDB" id="9741516at2759"/>
<dbReference type="PAN-GO" id="Q13296">
    <property type="GO annotations" value="2 GO annotations based on evolutionary models"/>
</dbReference>
<dbReference type="PhylomeDB" id="Q13296"/>
<dbReference type="TreeFam" id="TF338521"/>
<dbReference type="PathwayCommons" id="Q13296"/>
<dbReference type="SignaLink" id="Q13296"/>
<dbReference type="BioGRID-ORCS" id="4250">
    <property type="hits" value="15 hits in 1142 CRISPR screens"/>
</dbReference>
<dbReference type="ChiTaRS" id="SCGB2A2">
    <property type="organism name" value="human"/>
</dbReference>
<dbReference type="GeneWiki" id="Mammaglobin-A"/>
<dbReference type="GenomeRNAi" id="4250"/>
<dbReference type="Pharos" id="Q13296">
    <property type="development level" value="Tbio"/>
</dbReference>
<dbReference type="PRO" id="PR:Q13296"/>
<dbReference type="Proteomes" id="UP000005640">
    <property type="component" value="Chromosome 11"/>
</dbReference>
<dbReference type="RNAct" id="Q13296">
    <property type="molecule type" value="protein"/>
</dbReference>
<dbReference type="Bgee" id="ENSG00000110484">
    <property type="expression patterns" value="Expressed in upper leg skin and 97 other cell types or tissues"/>
</dbReference>
<dbReference type="ExpressionAtlas" id="Q13296">
    <property type="expression patterns" value="baseline and differential"/>
</dbReference>
<dbReference type="GO" id="GO:0005615">
    <property type="term" value="C:extracellular space"/>
    <property type="evidence" value="ECO:0000318"/>
    <property type="project" value="GO_Central"/>
</dbReference>
<dbReference type="GO" id="GO:0030521">
    <property type="term" value="P:androgen receptor signaling pathway"/>
    <property type="evidence" value="ECO:0000318"/>
    <property type="project" value="GO_Central"/>
</dbReference>
<dbReference type="CDD" id="cd00633">
    <property type="entry name" value="Secretoglobin"/>
    <property type="match status" value="1"/>
</dbReference>
<dbReference type="InterPro" id="IPR016126">
    <property type="entry name" value="Secretoglobin"/>
</dbReference>
<dbReference type="InterPro" id="IPR035960">
    <property type="entry name" value="Secretoglobin_sf"/>
</dbReference>
<dbReference type="PANTHER" id="PTHR14037:SF7">
    <property type="entry name" value="MAMMAGLOBIN-A"/>
    <property type="match status" value="1"/>
</dbReference>
<dbReference type="PANTHER" id="PTHR14037">
    <property type="entry name" value="MAMMAGLOBIN-RELATED"/>
    <property type="match status" value="1"/>
</dbReference>
<dbReference type="Pfam" id="PF01099">
    <property type="entry name" value="Uteroglobin"/>
    <property type="match status" value="1"/>
</dbReference>
<dbReference type="SUPFAM" id="SSF48201">
    <property type="entry name" value="Uteroglobin-like"/>
    <property type="match status" value="1"/>
</dbReference>
<dbReference type="PROSITE" id="PS51311">
    <property type="entry name" value="SCGB"/>
    <property type="match status" value="1"/>
</dbReference>
<comment type="interaction">
    <interactant intactId="EBI-9058786">
        <id>Q13296</id>
    </interactant>
    <interactant intactId="EBI-748201">
        <id>P50552</id>
        <label>VASP</label>
    </interactant>
    <organismsDiffer>false</organismsDiffer>
    <experiments>3</experiments>
</comment>
<comment type="subcellular location">
    <subcellularLocation>
        <location evidence="3">Secreted</location>
    </subcellularLocation>
</comment>
<comment type="alternative products">
    <event type="alternative splicing"/>
    <isoform>
        <id>Q13296-1</id>
        <name>1</name>
        <sequence type="displayed"/>
    </isoform>
    <isoform>
        <id>Q13296-2</id>
        <name>2</name>
        <sequence type="described" ref="VSP_009122"/>
    </isoform>
</comment>
<comment type="tissue specificity">
    <text>Mammary gland specific. Over-expressed in breast cancer.</text>
</comment>
<comment type="similarity">
    <text evidence="3">Belongs to the secretoglobin family. Lipophilin subfamily.</text>
</comment>
<reference key="1">
    <citation type="journal article" date="1996" name="Cancer Res.">
        <title>Mammaglobin, a mammary-specific member of the uteroglobin gene family, is overexpressed in human breast cancer.</title>
        <authorList>
            <person name="Watson M.A."/>
            <person name="Fleming T.P."/>
        </authorList>
    </citation>
    <scope>NUCLEOTIDE SEQUENCE [MRNA] (ISOFORM 1)</scope>
    <source>
        <tissue>Mammary gland</tissue>
    </source>
</reference>
<reference key="2">
    <citation type="journal article" date="1998" name="Oncogene">
        <title>Structure and transcriptional regulation of the human mammaglobin gene, a breast cancer associated member of the uteroglobin gene family localized to chromosome 11q13.</title>
        <authorList>
            <person name="Watson M.A."/>
            <person name="Darrow C."/>
            <person name="Zimonjic D.B."/>
            <person name="Popescu N.C."/>
            <person name="Fleming T."/>
        </authorList>
    </citation>
    <scope>NUCLEOTIDE SEQUENCE [GENOMIC DNA] (ISOFORM 1)</scope>
</reference>
<reference key="3">
    <citation type="submission" date="2003-01" db="EMBL/GenBank/DDBJ databases">
        <title>An alternative splicing isoform of mammaglobin.</title>
        <authorList>
            <person name="Zhao L."/>
            <person name="Nan K."/>
        </authorList>
    </citation>
    <scope>NUCLEOTIDE SEQUENCE [MRNA] (ISOFORM 2)</scope>
</reference>
<reference key="4">
    <citation type="journal article" date="2004" name="Genome Res.">
        <title>The status, quality, and expansion of the NIH full-length cDNA project: the Mammalian Gene Collection (MGC).</title>
        <authorList>
            <consortium name="The MGC Project Team"/>
        </authorList>
    </citation>
    <scope>NUCLEOTIDE SEQUENCE [LARGE SCALE MRNA] (ISOFORM 1)</scope>
</reference>